<comment type="cofactor">
    <cofactor evidence="1">
        <name>Zn(2+)</name>
        <dbReference type="ChEBI" id="CHEBI:29105"/>
    </cofactor>
    <text evidence="1">Binds 2 Zn(2+) ions per subunit.</text>
</comment>
<comment type="similarity">
    <text evidence="2">Belongs to the metallo-beta-lactamase superfamily. Glyoxalase II family.</text>
</comment>
<name>Y2581_MYCTU</name>
<sequence>MLITGFPAGLLACNCYVLAERPGTDAVIVDPGQGAMGTLRRILDKNRLTPAAVLLTHGHIDHIWSAQKVSDTFGCPTYVHPADRFMLTDPIYGLGPRIAQLVAGAFFREPKQVVELDRDGDKIDLGGISVNIDHTPGHTRGSVVFRVLQATNNDKDIVFTGDTLFERAIGRTDLAGGSGRDLLRSIVDKLLVLDDSTVVLPGHGNSTTIGAERRFNPFLEGLSR</sequence>
<evidence type="ECO:0000250" key="1">
    <source>
        <dbReference type="UniProtKB" id="Q16775"/>
    </source>
</evidence>
<evidence type="ECO:0000305" key="2"/>
<protein>
    <recommendedName>
        <fullName>Uncharacterized protein Rv2581c</fullName>
        <ecNumber>3.-.-.-</ecNumber>
    </recommendedName>
</protein>
<feature type="chain" id="PRO_0000192361" description="Uncharacterized protein Rv2581c">
    <location>
        <begin position="1"/>
        <end position="224"/>
    </location>
</feature>
<feature type="binding site" evidence="1">
    <location>
        <position position="57"/>
    </location>
    <ligand>
        <name>Zn(2+)</name>
        <dbReference type="ChEBI" id="CHEBI:29105"/>
        <label>1</label>
    </ligand>
</feature>
<feature type="binding site" evidence="1">
    <location>
        <position position="59"/>
    </location>
    <ligand>
        <name>Zn(2+)</name>
        <dbReference type="ChEBI" id="CHEBI:29105"/>
        <label>1</label>
    </ligand>
</feature>
<feature type="binding site" evidence="1">
    <location>
        <position position="61"/>
    </location>
    <ligand>
        <name>Zn(2+)</name>
        <dbReference type="ChEBI" id="CHEBI:29105"/>
        <label>2</label>
    </ligand>
</feature>
<feature type="binding site" evidence="1">
    <location>
        <position position="62"/>
    </location>
    <ligand>
        <name>Zn(2+)</name>
        <dbReference type="ChEBI" id="CHEBI:29105"/>
        <label>2</label>
    </ligand>
</feature>
<feature type="binding site" evidence="1">
    <location>
        <position position="138"/>
    </location>
    <ligand>
        <name>Zn(2+)</name>
        <dbReference type="ChEBI" id="CHEBI:29105"/>
        <label>1</label>
    </ligand>
</feature>
<feature type="binding site" evidence="1">
    <location>
        <position position="162"/>
    </location>
    <ligand>
        <name>Zn(2+)</name>
        <dbReference type="ChEBI" id="CHEBI:29105"/>
        <label>1</label>
    </ligand>
</feature>
<feature type="binding site" evidence="1">
    <location>
        <position position="162"/>
    </location>
    <ligand>
        <name>Zn(2+)</name>
        <dbReference type="ChEBI" id="CHEBI:29105"/>
        <label>2</label>
    </ligand>
</feature>
<feature type="binding site" evidence="1">
    <location>
        <position position="203"/>
    </location>
    <ligand>
        <name>Zn(2+)</name>
        <dbReference type="ChEBI" id="CHEBI:29105"/>
        <label>2</label>
    </ligand>
</feature>
<dbReference type="EC" id="3.-.-.-"/>
<dbReference type="EMBL" id="AL123456">
    <property type="protein sequence ID" value="CCP45377.1"/>
    <property type="molecule type" value="Genomic_DNA"/>
</dbReference>
<dbReference type="PIR" id="D70725">
    <property type="entry name" value="D70725"/>
</dbReference>
<dbReference type="RefSeq" id="NP_217097.1">
    <property type="nucleotide sequence ID" value="NC_000962.3"/>
</dbReference>
<dbReference type="RefSeq" id="WP_003413366.1">
    <property type="nucleotide sequence ID" value="NZ_NVQJ01000023.1"/>
</dbReference>
<dbReference type="SMR" id="P9WMW3"/>
<dbReference type="FunCoup" id="P9WMW3">
    <property type="interactions" value="55"/>
</dbReference>
<dbReference type="STRING" id="83332.Rv2581c"/>
<dbReference type="PaxDb" id="83332-Rv2581c"/>
<dbReference type="DNASU" id="888217"/>
<dbReference type="GeneID" id="888217"/>
<dbReference type="KEGG" id="mtu:Rv2581c"/>
<dbReference type="KEGG" id="mtv:RVBD_2581c"/>
<dbReference type="TubercuList" id="Rv2581c"/>
<dbReference type="eggNOG" id="COG0491">
    <property type="taxonomic scope" value="Bacteria"/>
</dbReference>
<dbReference type="InParanoid" id="P9WMW3"/>
<dbReference type="OrthoDB" id="9802991at2"/>
<dbReference type="PhylomeDB" id="P9WMW3"/>
<dbReference type="Proteomes" id="UP000001584">
    <property type="component" value="Chromosome"/>
</dbReference>
<dbReference type="GO" id="GO:0016787">
    <property type="term" value="F:hydrolase activity"/>
    <property type="evidence" value="ECO:0007669"/>
    <property type="project" value="UniProtKB-KW"/>
</dbReference>
<dbReference type="GO" id="GO:0046872">
    <property type="term" value="F:metal ion binding"/>
    <property type="evidence" value="ECO:0007669"/>
    <property type="project" value="UniProtKB-KW"/>
</dbReference>
<dbReference type="CDD" id="cd06262">
    <property type="entry name" value="metallo-hydrolase-like_MBL-fold"/>
    <property type="match status" value="1"/>
</dbReference>
<dbReference type="Gene3D" id="3.60.15.10">
    <property type="entry name" value="Ribonuclease Z/Hydroxyacylglutathione hydrolase-like"/>
    <property type="match status" value="1"/>
</dbReference>
<dbReference type="InterPro" id="IPR051453">
    <property type="entry name" value="MBL_Glyoxalase_II"/>
</dbReference>
<dbReference type="InterPro" id="IPR001279">
    <property type="entry name" value="Metallo-B-lactamas"/>
</dbReference>
<dbReference type="InterPro" id="IPR036866">
    <property type="entry name" value="RibonucZ/Hydroxyglut_hydro"/>
</dbReference>
<dbReference type="PANTHER" id="PTHR46233">
    <property type="entry name" value="HYDROXYACYLGLUTATHIONE HYDROLASE GLOC"/>
    <property type="match status" value="1"/>
</dbReference>
<dbReference type="PANTHER" id="PTHR46233:SF3">
    <property type="entry name" value="HYDROXYACYLGLUTATHIONE HYDROLASE GLOC"/>
    <property type="match status" value="1"/>
</dbReference>
<dbReference type="Pfam" id="PF00753">
    <property type="entry name" value="Lactamase_B"/>
    <property type="match status" value="1"/>
</dbReference>
<dbReference type="SMART" id="SM00849">
    <property type="entry name" value="Lactamase_B"/>
    <property type="match status" value="1"/>
</dbReference>
<dbReference type="SUPFAM" id="SSF56281">
    <property type="entry name" value="Metallo-hydrolase/oxidoreductase"/>
    <property type="match status" value="1"/>
</dbReference>
<keyword id="KW-0378">Hydrolase</keyword>
<keyword id="KW-0479">Metal-binding</keyword>
<keyword id="KW-1185">Reference proteome</keyword>
<keyword id="KW-0862">Zinc</keyword>
<proteinExistence type="evidence at protein level"/>
<gene>
    <name type="ordered locus">Rv2581c</name>
    <name type="ORF">MTCY227.20</name>
</gene>
<accession>P9WMW3</accession>
<accession>L0TCZ9</accession>
<accession>P64261</accession>
<accession>Q50640</accession>
<reference key="1">
    <citation type="journal article" date="1998" name="Nature">
        <title>Deciphering the biology of Mycobacterium tuberculosis from the complete genome sequence.</title>
        <authorList>
            <person name="Cole S.T."/>
            <person name="Brosch R."/>
            <person name="Parkhill J."/>
            <person name="Garnier T."/>
            <person name="Churcher C.M."/>
            <person name="Harris D.E."/>
            <person name="Gordon S.V."/>
            <person name="Eiglmeier K."/>
            <person name="Gas S."/>
            <person name="Barry C.E. III"/>
            <person name="Tekaia F."/>
            <person name="Badcock K."/>
            <person name="Basham D."/>
            <person name="Brown D."/>
            <person name="Chillingworth T."/>
            <person name="Connor R."/>
            <person name="Davies R.M."/>
            <person name="Devlin K."/>
            <person name="Feltwell T."/>
            <person name="Gentles S."/>
            <person name="Hamlin N."/>
            <person name="Holroyd S."/>
            <person name="Hornsby T."/>
            <person name="Jagels K."/>
            <person name="Krogh A."/>
            <person name="McLean J."/>
            <person name="Moule S."/>
            <person name="Murphy L.D."/>
            <person name="Oliver S."/>
            <person name="Osborne J."/>
            <person name="Quail M.A."/>
            <person name="Rajandream M.A."/>
            <person name="Rogers J."/>
            <person name="Rutter S."/>
            <person name="Seeger K."/>
            <person name="Skelton S."/>
            <person name="Squares S."/>
            <person name="Squares R."/>
            <person name="Sulston J.E."/>
            <person name="Taylor K."/>
            <person name="Whitehead S."/>
            <person name="Barrell B.G."/>
        </authorList>
    </citation>
    <scope>NUCLEOTIDE SEQUENCE [LARGE SCALE GENOMIC DNA]</scope>
    <source>
        <strain>ATCC 25618 / H37Rv</strain>
    </source>
</reference>
<reference key="2">
    <citation type="journal article" date="2011" name="Mol. Cell. Proteomics">
        <title>Proteogenomic analysis of Mycobacterium tuberculosis by high resolution mass spectrometry.</title>
        <authorList>
            <person name="Kelkar D.S."/>
            <person name="Kumar D."/>
            <person name="Kumar P."/>
            <person name="Balakrishnan L."/>
            <person name="Muthusamy B."/>
            <person name="Yadav A.K."/>
            <person name="Shrivastava P."/>
            <person name="Marimuthu A."/>
            <person name="Anand S."/>
            <person name="Sundaram H."/>
            <person name="Kingsbury R."/>
            <person name="Harsha H.C."/>
            <person name="Nair B."/>
            <person name="Prasad T.S."/>
            <person name="Chauhan D.S."/>
            <person name="Katoch K."/>
            <person name="Katoch V.M."/>
            <person name="Kumar P."/>
            <person name="Chaerkady R."/>
            <person name="Ramachandran S."/>
            <person name="Dash D."/>
            <person name="Pandey A."/>
        </authorList>
    </citation>
    <scope>IDENTIFICATION BY MASS SPECTROMETRY [LARGE SCALE ANALYSIS]</scope>
    <source>
        <strain>ATCC 25618 / H37Rv</strain>
    </source>
</reference>
<organism>
    <name type="scientific">Mycobacterium tuberculosis (strain ATCC 25618 / H37Rv)</name>
    <dbReference type="NCBI Taxonomy" id="83332"/>
    <lineage>
        <taxon>Bacteria</taxon>
        <taxon>Bacillati</taxon>
        <taxon>Actinomycetota</taxon>
        <taxon>Actinomycetes</taxon>
        <taxon>Mycobacteriales</taxon>
        <taxon>Mycobacteriaceae</taxon>
        <taxon>Mycobacterium</taxon>
        <taxon>Mycobacterium tuberculosis complex</taxon>
    </lineage>
</organism>